<protein>
    <recommendedName>
        <fullName>GPI-anchor transamidase</fullName>
        <shortName>GPI transamidase</shortName>
        <ecNumber>3.-.-.-</ecNumber>
    </recommendedName>
</protein>
<sequence length="411" mass="47402">MRIAMHLPLLLLYIFLLPLSGANNTDAAHEVIATNTNNWAVLVSTSRFWFNYRHMANVLSMYRTVKRLGIPDSQIILMLSDDVACNSRNLFPGSVFNNKDHAIDLYGDSVEVDYRGYEVTVENFIRLLTDRWTEDHPKSKRLLTDENSNIFIYMTGHGGDDFLKFQDAEEIASEDIADAFQQMYEKKRYNEIFFMIDTCQANTMYSKFYSPNILAVGSSEMDESSYSHHSDVEIGVAVIDRFTYYCLDFLEQIDKNSTLTLQDLFDSFTFEKIHSHVGVRTDLFDRNPSEVLITDFFANVQNVIPDDSKPLSVSHYHHYKDHIDTAQYELNNNVLDLALETYRKNNQSSKIEKKIKDIKSTSVLDVDIDSNECFFTSFKQSATIILALIVTILWFMLRGNTAKATYDLYTN</sequence>
<evidence type="ECO:0000250" key="1"/>
<evidence type="ECO:0000255" key="2"/>
<evidence type="ECO:0000269" key="3">
    <source>
    </source>
</evidence>
<evidence type="ECO:0000269" key="4">
    <source>
    </source>
</evidence>
<evidence type="ECO:0000269" key="5">
    <source>
    </source>
</evidence>
<evidence type="ECO:0000269" key="6">
    <source>
    </source>
</evidence>
<evidence type="ECO:0000305" key="7"/>
<dbReference type="EC" id="3.-.-.-"/>
<dbReference type="EMBL" id="U32517">
    <property type="protein sequence ID" value="AAB64766.1"/>
    <property type="molecule type" value="Genomic_DNA"/>
</dbReference>
<dbReference type="EMBL" id="AY557794">
    <property type="protein sequence ID" value="AAS56120.1"/>
    <property type="molecule type" value="Genomic_DNA"/>
</dbReference>
<dbReference type="EMBL" id="BK006938">
    <property type="protein sequence ID" value="DAA12173.1"/>
    <property type="molecule type" value="Genomic_DNA"/>
</dbReference>
<dbReference type="PIR" id="S59796">
    <property type="entry name" value="S59796"/>
</dbReference>
<dbReference type="RefSeq" id="NP_010618.1">
    <property type="nucleotide sequence ID" value="NM_001180639.1"/>
</dbReference>
<dbReference type="SMR" id="P49018"/>
<dbReference type="BioGRID" id="32388">
    <property type="interactions" value="668"/>
</dbReference>
<dbReference type="ComplexPortal" id="CPX-1275">
    <property type="entry name" value="GPI-anchor transamidase complex"/>
</dbReference>
<dbReference type="DIP" id="DIP-5371N"/>
<dbReference type="FunCoup" id="P49018">
    <property type="interactions" value="761"/>
</dbReference>
<dbReference type="IntAct" id="P49018">
    <property type="interactions" value="56"/>
</dbReference>
<dbReference type="MINT" id="P49018"/>
<dbReference type="STRING" id="4932.YDR331W"/>
<dbReference type="MEROPS" id="C13.005"/>
<dbReference type="GlyCosmos" id="P49018">
    <property type="glycosylation" value="2 sites, No reported glycans"/>
</dbReference>
<dbReference type="GlyGen" id="P49018">
    <property type="glycosylation" value="2 sites"/>
</dbReference>
<dbReference type="PaxDb" id="4932-YDR331W"/>
<dbReference type="PeptideAtlas" id="P49018"/>
<dbReference type="EnsemblFungi" id="YDR331W_mRNA">
    <property type="protein sequence ID" value="YDR331W"/>
    <property type="gene ID" value="YDR331W"/>
</dbReference>
<dbReference type="GeneID" id="851931"/>
<dbReference type="KEGG" id="sce:YDR331W"/>
<dbReference type="AGR" id="SGD:S000002739"/>
<dbReference type="SGD" id="S000002739">
    <property type="gene designation" value="GPI8"/>
</dbReference>
<dbReference type="VEuPathDB" id="FungiDB:YDR331W"/>
<dbReference type="eggNOG" id="KOG1349">
    <property type="taxonomic scope" value="Eukaryota"/>
</dbReference>
<dbReference type="GeneTree" id="ENSGT00940000156273"/>
<dbReference type="HOGENOM" id="CLU_044656_2_1_1"/>
<dbReference type="InParanoid" id="P49018"/>
<dbReference type="OMA" id="VMESQFP"/>
<dbReference type="OrthoDB" id="192611at2759"/>
<dbReference type="BioCyc" id="YEAST:G3O-29887-MONOMER"/>
<dbReference type="UniPathway" id="UPA00196"/>
<dbReference type="BioGRID-ORCS" id="851931">
    <property type="hits" value="7 hits in 10 CRISPR screens"/>
</dbReference>
<dbReference type="PRO" id="PR:P49018"/>
<dbReference type="Proteomes" id="UP000002311">
    <property type="component" value="Chromosome IV"/>
</dbReference>
<dbReference type="RNAct" id="P49018">
    <property type="molecule type" value="protein"/>
</dbReference>
<dbReference type="GO" id="GO:0005783">
    <property type="term" value="C:endoplasmic reticulum"/>
    <property type="evidence" value="ECO:0007005"/>
    <property type="project" value="SGD"/>
</dbReference>
<dbReference type="GO" id="GO:0005789">
    <property type="term" value="C:endoplasmic reticulum membrane"/>
    <property type="evidence" value="ECO:0000314"/>
    <property type="project" value="UniProtKB"/>
</dbReference>
<dbReference type="GO" id="GO:0042765">
    <property type="term" value="C:GPI-anchor transamidase complex"/>
    <property type="evidence" value="ECO:0000314"/>
    <property type="project" value="SGD"/>
</dbReference>
<dbReference type="GO" id="GO:0003923">
    <property type="term" value="F:GPI-anchor transamidase activity"/>
    <property type="evidence" value="ECO:0000316"/>
    <property type="project" value="SGD"/>
</dbReference>
<dbReference type="GO" id="GO:0016255">
    <property type="term" value="P:attachment of GPI anchor to protein"/>
    <property type="evidence" value="ECO:0000315"/>
    <property type="project" value="UniProtKB"/>
</dbReference>
<dbReference type="GO" id="GO:0031505">
    <property type="term" value="P:fungal-type cell wall organization"/>
    <property type="evidence" value="ECO:0000303"/>
    <property type="project" value="ComplexPortal"/>
</dbReference>
<dbReference type="GO" id="GO:0006506">
    <property type="term" value="P:GPI anchor biosynthetic process"/>
    <property type="evidence" value="ECO:0007669"/>
    <property type="project" value="UniProtKB-UniPathway"/>
</dbReference>
<dbReference type="GO" id="GO:0006508">
    <property type="term" value="P:proteolysis"/>
    <property type="evidence" value="ECO:0007669"/>
    <property type="project" value="UniProtKB-KW"/>
</dbReference>
<dbReference type="FunFam" id="3.40.50.1460:FF:000003">
    <property type="entry name" value="GPI-anchor transamidase"/>
    <property type="match status" value="1"/>
</dbReference>
<dbReference type="Gene3D" id="3.40.50.1460">
    <property type="match status" value="1"/>
</dbReference>
<dbReference type="InterPro" id="IPR028361">
    <property type="entry name" value="GPI_transamidase"/>
</dbReference>
<dbReference type="InterPro" id="IPR001096">
    <property type="entry name" value="Peptidase_C13"/>
</dbReference>
<dbReference type="PANTHER" id="PTHR48067">
    <property type="entry name" value="GPI-ANCHOR TRANSAMIDASE"/>
    <property type="match status" value="1"/>
</dbReference>
<dbReference type="PANTHER" id="PTHR48067:SF1">
    <property type="entry name" value="GPI-ANCHOR TRANSAMIDASE"/>
    <property type="match status" value="1"/>
</dbReference>
<dbReference type="Pfam" id="PF01650">
    <property type="entry name" value="Peptidase_C13"/>
    <property type="match status" value="1"/>
</dbReference>
<dbReference type="PIRSF" id="PIRSF500138">
    <property type="entry name" value="GPI8"/>
    <property type="match status" value="1"/>
</dbReference>
<dbReference type="PIRSF" id="PIRSF019663">
    <property type="entry name" value="Legumain"/>
    <property type="match status" value="1"/>
</dbReference>
<dbReference type="PRINTS" id="PR00776">
    <property type="entry name" value="HEMOGLOBNASE"/>
</dbReference>
<feature type="signal peptide" evidence="2">
    <location>
        <begin position="1"/>
        <end position="22"/>
    </location>
</feature>
<feature type="chain" id="PRO_0000026532" description="GPI-anchor transamidase">
    <location>
        <begin position="23"/>
        <end position="411"/>
    </location>
</feature>
<feature type="topological domain" description="Lumenal" evidence="2">
    <location>
        <begin position="23"/>
        <end position="376"/>
    </location>
</feature>
<feature type="transmembrane region" description="Helical" evidence="2">
    <location>
        <begin position="377"/>
        <end position="397"/>
    </location>
</feature>
<feature type="topological domain" description="Cytoplasmic" evidence="2">
    <location>
        <begin position="398"/>
        <end position="411"/>
    </location>
</feature>
<feature type="active site">
    <location>
        <position position="157"/>
    </location>
</feature>
<feature type="active site">
    <location>
        <position position="199"/>
    </location>
</feature>
<feature type="glycosylation site" description="N-linked (GlcNAc...) asparagine" evidence="2">
    <location>
        <position position="256"/>
    </location>
</feature>
<feature type="glycosylation site" description="N-linked (GlcNAc...) asparagine" evidence="2">
    <location>
        <position position="346"/>
    </location>
</feature>
<feature type="disulfide bond" description="Interchain (with C-194 in GPI16)" evidence="1">
    <location>
        <position position="85"/>
    </location>
</feature>
<feature type="mutagenesis site" description="Partial loss of activity." evidence="3">
    <original>H</original>
    <variation>A</variation>
    <location>
        <position position="54"/>
    </location>
</feature>
<feature type="mutagenesis site" description="No loss of activity." evidence="3">
    <original>S</original>
    <variation>A</variation>
    <location>
        <position position="60"/>
    </location>
</feature>
<feature type="mutagenesis site" description="No loss of activity." evidence="3">
    <original>S</original>
    <variation>C</variation>
    <location>
        <position position="60"/>
    </location>
</feature>
<feature type="mutagenesis site" description="No loss of activity." evidence="3">
    <original>C</original>
    <variation>A</variation>
    <location>
        <position position="85"/>
    </location>
</feature>
<feature type="mutagenesis site" description="Loss of activity." evidence="3 4">
    <original>H</original>
    <variation>A</variation>
    <location>
        <position position="157"/>
    </location>
</feature>
<feature type="mutagenesis site" description="Loss of activity." evidence="3 4">
    <original>C</original>
    <variation>A</variation>
    <location>
        <position position="199"/>
    </location>
</feature>
<keyword id="KW-1015">Disulfide bond</keyword>
<keyword id="KW-0256">Endoplasmic reticulum</keyword>
<keyword id="KW-0325">Glycoprotein</keyword>
<keyword id="KW-0337">GPI-anchor biosynthesis</keyword>
<keyword id="KW-0378">Hydrolase</keyword>
<keyword id="KW-0472">Membrane</keyword>
<keyword id="KW-0645">Protease</keyword>
<keyword id="KW-1185">Reference proteome</keyword>
<keyword id="KW-0732">Signal</keyword>
<keyword id="KW-0788">Thiol protease</keyword>
<keyword id="KW-0812">Transmembrane</keyword>
<keyword id="KW-1133">Transmembrane helix</keyword>
<reference key="1">
    <citation type="journal article" date="1997" name="Nature">
        <title>The nucleotide sequence of Saccharomyces cerevisiae chromosome IV.</title>
        <authorList>
            <person name="Jacq C."/>
            <person name="Alt-Moerbe J."/>
            <person name="Andre B."/>
            <person name="Arnold W."/>
            <person name="Bahr A."/>
            <person name="Ballesta J.P.G."/>
            <person name="Bargues M."/>
            <person name="Baron L."/>
            <person name="Becker A."/>
            <person name="Biteau N."/>
            <person name="Bloecker H."/>
            <person name="Blugeon C."/>
            <person name="Boskovic J."/>
            <person name="Brandt P."/>
            <person name="Brueckner M."/>
            <person name="Buitrago M.J."/>
            <person name="Coster F."/>
            <person name="Delaveau T."/>
            <person name="del Rey F."/>
            <person name="Dujon B."/>
            <person name="Eide L.G."/>
            <person name="Garcia-Cantalejo J.M."/>
            <person name="Goffeau A."/>
            <person name="Gomez-Peris A."/>
            <person name="Granotier C."/>
            <person name="Hanemann V."/>
            <person name="Hankeln T."/>
            <person name="Hoheisel J.D."/>
            <person name="Jaeger W."/>
            <person name="Jimenez A."/>
            <person name="Jonniaux J.-L."/>
            <person name="Kraemer C."/>
            <person name="Kuester H."/>
            <person name="Laamanen P."/>
            <person name="Legros Y."/>
            <person name="Louis E.J."/>
            <person name="Moeller-Rieker S."/>
            <person name="Monnet A."/>
            <person name="Moro M."/>
            <person name="Mueller-Auer S."/>
            <person name="Nussbaumer B."/>
            <person name="Paricio N."/>
            <person name="Paulin L."/>
            <person name="Perea J."/>
            <person name="Perez-Alonso M."/>
            <person name="Perez-Ortin J.E."/>
            <person name="Pohl T.M."/>
            <person name="Prydz H."/>
            <person name="Purnelle B."/>
            <person name="Rasmussen S.W."/>
            <person name="Remacha M.A."/>
            <person name="Revuelta J.L."/>
            <person name="Rieger M."/>
            <person name="Salom D."/>
            <person name="Saluz H.P."/>
            <person name="Saiz J.E."/>
            <person name="Saren A.-M."/>
            <person name="Schaefer M."/>
            <person name="Scharfe M."/>
            <person name="Schmidt E.R."/>
            <person name="Schneider C."/>
            <person name="Scholler P."/>
            <person name="Schwarz S."/>
            <person name="Soler-Mira A."/>
            <person name="Urrestarazu L.A."/>
            <person name="Verhasselt P."/>
            <person name="Vissers S."/>
            <person name="Voet M."/>
            <person name="Volckaert G."/>
            <person name="Wagner G."/>
            <person name="Wambutt R."/>
            <person name="Wedler E."/>
            <person name="Wedler H."/>
            <person name="Woelfl S."/>
            <person name="Harris D.E."/>
            <person name="Bowman S."/>
            <person name="Brown D."/>
            <person name="Churcher C.M."/>
            <person name="Connor R."/>
            <person name="Dedman K."/>
            <person name="Gentles S."/>
            <person name="Hamlin N."/>
            <person name="Hunt S."/>
            <person name="Jones L."/>
            <person name="McDonald S."/>
            <person name="Murphy L.D."/>
            <person name="Niblett D."/>
            <person name="Odell C."/>
            <person name="Oliver K."/>
            <person name="Rajandream M.A."/>
            <person name="Richards C."/>
            <person name="Shore L."/>
            <person name="Walsh S.V."/>
            <person name="Barrell B.G."/>
            <person name="Dietrich F.S."/>
            <person name="Mulligan J.T."/>
            <person name="Allen E."/>
            <person name="Araujo R."/>
            <person name="Aviles E."/>
            <person name="Berno A."/>
            <person name="Carpenter J."/>
            <person name="Chen E."/>
            <person name="Cherry J.M."/>
            <person name="Chung E."/>
            <person name="Duncan M."/>
            <person name="Hunicke-Smith S."/>
            <person name="Hyman R.W."/>
            <person name="Komp C."/>
            <person name="Lashkari D."/>
            <person name="Lew H."/>
            <person name="Lin D."/>
            <person name="Mosedale D."/>
            <person name="Nakahara K."/>
            <person name="Namath A."/>
            <person name="Oefner P."/>
            <person name="Oh C."/>
            <person name="Petel F.X."/>
            <person name="Roberts D."/>
            <person name="Schramm S."/>
            <person name="Schroeder M."/>
            <person name="Shogren T."/>
            <person name="Shroff N."/>
            <person name="Winant A."/>
            <person name="Yelton M.A."/>
            <person name="Botstein D."/>
            <person name="Davis R.W."/>
            <person name="Johnston M."/>
            <person name="Andrews S."/>
            <person name="Brinkman R."/>
            <person name="Cooper J."/>
            <person name="Ding H."/>
            <person name="Du Z."/>
            <person name="Favello A."/>
            <person name="Fulton L."/>
            <person name="Gattung S."/>
            <person name="Greco T."/>
            <person name="Hallsworth K."/>
            <person name="Hawkins J."/>
            <person name="Hillier L.W."/>
            <person name="Jier M."/>
            <person name="Johnson D."/>
            <person name="Johnston L."/>
            <person name="Kirsten J."/>
            <person name="Kucaba T."/>
            <person name="Langston Y."/>
            <person name="Latreille P."/>
            <person name="Le T."/>
            <person name="Mardis E."/>
            <person name="Menezes S."/>
            <person name="Miller N."/>
            <person name="Nhan M."/>
            <person name="Pauley A."/>
            <person name="Peluso D."/>
            <person name="Rifkin L."/>
            <person name="Riles L."/>
            <person name="Taich A."/>
            <person name="Trevaskis E."/>
            <person name="Vignati D."/>
            <person name="Wilcox L."/>
            <person name="Wohldman P."/>
            <person name="Vaudin M."/>
            <person name="Wilson R."/>
            <person name="Waterston R."/>
            <person name="Albermann K."/>
            <person name="Hani J."/>
            <person name="Heumann K."/>
            <person name="Kleine K."/>
            <person name="Mewes H.-W."/>
            <person name="Zollner A."/>
            <person name="Zaccaria P."/>
        </authorList>
    </citation>
    <scope>NUCLEOTIDE SEQUENCE [LARGE SCALE GENOMIC DNA]</scope>
    <source>
        <strain>ATCC 204508 / S288c</strain>
    </source>
</reference>
<reference key="2">
    <citation type="journal article" date="2014" name="G3 (Bethesda)">
        <title>The reference genome sequence of Saccharomyces cerevisiae: Then and now.</title>
        <authorList>
            <person name="Engel S.R."/>
            <person name="Dietrich F.S."/>
            <person name="Fisk D.G."/>
            <person name="Binkley G."/>
            <person name="Balakrishnan R."/>
            <person name="Costanzo M.C."/>
            <person name="Dwight S.S."/>
            <person name="Hitz B.C."/>
            <person name="Karra K."/>
            <person name="Nash R.S."/>
            <person name="Weng S."/>
            <person name="Wong E.D."/>
            <person name="Lloyd P."/>
            <person name="Skrzypek M.S."/>
            <person name="Miyasato S.R."/>
            <person name="Simison M."/>
            <person name="Cherry J.M."/>
        </authorList>
    </citation>
    <scope>GENOME REANNOTATION</scope>
    <source>
        <strain>ATCC 204508 / S288c</strain>
    </source>
</reference>
<reference key="3">
    <citation type="journal article" date="2007" name="Genome Res.">
        <title>Approaching a complete repository of sequence-verified protein-encoding clones for Saccharomyces cerevisiae.</title>
        <authorList>
            <person name="Hu Y."/>
            <person name="Rolfs A."/>
            <person name="Bhullar B."/>
            <person name="Murthy T.V.S."/>
            <person name="Zhu C."/>
            <person name="Berger M.F."/>
            <person name="Camargo A.A."/>
            <person name="Kelley F."/>
            <person name="McCarron S."/>
            <person name="Jepson D."/>
            <person name="Richardson A."/>
            <person name="Raphael J."/>
            <person name="Moreira D."/>
            <person name="Taycher E."/>
            <person name="Zuo D."/>
            <person name="Mohr S."/>
            <person name="Kane M.F."/>
            <person name="Williamson J."/>
            <person name="Simpson A.J.G."/>
            <person name="Bulyk M.L."/>
            <person name="Harlow E."/>
            <person name="Marsischky G."/>
            <person name="Kolodner R.D."/>
            <person name="LaBaer J."/>
        </authorList>
    </citation>
    <scope>NUCLEOTIDE SEQUENCE [GENOMIC DNA]</scope>
    <source>
        <strain>ATCC 204508 / S288c</strain>
    </source>
</reference>
<reference key="4">
    <citation type="journal article" date="1996" name="EMBO J.">
        <title>Yeast Gpi8p is essential for GPI anchor attachment onto proteins.</title>
        <authorList>
            <person name="Benghezal M."/>
            <person name="Benachour A."/>
            <person name="Rusconi S."/>
            <person name="Aebi M."/>
            <person name="Conzelmann A."/>
        </authorList>
    </citation>
    <scope>CHARACTERIZATION</scope>
</reference>
<reference key="5">
    <citation type="journal article" date="2000" name="Biochemistry">
        <title>Active site determination of Gpi8p, a caspase-related enzyme required for glycosylphosphatidylinositol anchor addition to proteins.</title>
        <authorList>
            <person name="Meyer U."/>
            <person name="Benghezal M."/>
            <person name="Imhof I."/>
            <person name="Conzelmann A."/>
        </authorList>
    </citation>
    <scope>ACTIVE SITE</scope>
    <scope>MUTAGENESIS OF HIS-54; SER-60; CYS-85; HIS-157 AND CYS-199</scope>
</reference>
<reference key="6">
    <citation type="journal article" date="2000" name="Mol. Biol. Cell">
        <title>Gaa1p and gpi8p are components of a glycosylphosphatidylinositol (GPI) transamidase that mediates attachment of GPI to proteins.</title>
        <authorList>
            <person name="Ohishi K."/>
            <person name="Inoue N."/>
            <person name="Maeda Y."/>
            <person name="Takeda J."/>
            <person name="Riezman H."/>
            <person name="Kinoshita T."/>
        </authorList>
    </citation>
    <scope>ACTIVE SITE</scope>
    <scope>MUTAGENESIS OF HIS-157 AND CYS-199</scope>
</reference>
<reference key="7">
    <citation type="journal article" date="2001" name="Mol. Biol. Cell">
        <title>The GPI transamidase complex of Saccharomyces cerevisiae contains Gaa1p, Gpi8p, and Gpi16p.</title>
        <authorList>
            <person name="Fraering P."/>
            <person name="Imhof I."/>
            <person name="Meyer U."/>
            <person name="Strub J.-M."/>
            <person name="van Dorsselaer A."/>
            <person name="Vionnet C."/>
            <person name="Conzelmann A."/>
        </authorList>
    </citation>
    <scope>SUBUNIT</scope>
</reference>
<reference key="8">
    <citation type="journal article" date="2003" name="Nature">
        <title>Global analysis of protein expression in yeast.</title>
        <authorList>
            <person name="Ghaemmaghami S."/>
            <person name="Huh W.-K."/>
            <person name="Bower K."/>
            <person name="Howson R.W."/>
            <person name="Belle A."/>
            <person name="Dephoure N."/>
            <person name="O'Shea E.K."/>
            <person name="Weissman J.S."/>
        </authorList>
    </citation>
    <scope>LEVEL OF PROTEIN EXPRESSION [LARGE SCALE ANALYSIS]</scope>
</reference>
<organism>
    <name type="scientific">Saccharomyces cerevisiae (strain ATCC 204508 / S288c)</name>
    <name type="common">Baker's yeast</name>
    <dbReference type="NCBI Taxonomy" id="559292"/>
    <lineage>
        <taxon>Eukaryota</taxon>
        <taxon>Fungi</taxon>
        <taxon>Dikarya</taxon>
        <taxon>Ascomycota</taxon>
        <taxon>Saccharomycotina</taxon>
        <taxon>Saccharomycetes</taxon>
        <taxon>Saccharomycetales</taxon>
        <taxon>Saccharomycetaceae</taxon>
        <taxon>Saccharomyces</taxon>
    </lineage>
</organism>
<proteinExistence type="evidence at protein level"/>
<gene>
    <name type="primary">GPI8</name>
    <name type="ordered locus">YDR331W</name>
    <name type="ORF">D9798.2</name>
</gene>
<name>GPI8_YEAST</name>
<comment type="function">
    <text>Mediates GPI anchoring in the endoplasmic reticulum, by replacing a protein's C-terminal GPI attachment signal peptide with a pre-assembled GPI. During this transamidation reaction, the GPI transamidase forms a carbonyl intermediate with the substrate protein.</text>
</comment>
<comment type="pathway">
    <text>Glycolipid biosynthesis; glycosylphosphatidylinositol-anchor biosynthesis.</text>
</comment>
<comment type="subunit">
    <text evidence="5">Forms a complex with CDC91, GPI16, GPI17 and GAA1.</text>
</comment>
<comment type="interaction">
    <interactant intactId="EBI-7822">
        <id>P49018</id>
    </interactant>
    <interactant intactId="EBI-7252">
        <id>P39012</id>
        <label>GAA1</label>
    </interactant>
    <organismsDiffer>false</organismsDiffer>
    <experiments>4</experiments>
</comment>
<comment type="interaction">
    <interactant intactId="EBI-7822">
        <id>P49018</id>
    </interactant>
    <interactant intactId="EBI-24869">
        <id>P38875</id>
        <label>GPI16</label>
    </interactant>
    <organismsDiffer>false</organismsDiffer>
    <experiments>4</experiments>
</comment>
<comment type="interaction">
    <interactant intactId="EBI-7822">
        <id>P49018</id>
    </interactant>
    <interactant intactId="EBI-7777">
        <id>Q04080</id>
        <label>GPI17</label>
    </interactant>
    <organismsDiffer>false</organismsDiffer>
    <experiments>5</experiments>
</comment>
<comment type="subcellular location">
    <subcellularLocation>
        <location>Endoplasmic reticulum membrane</location>
        <topology>Single-pass type I membrane protein</topology>
    </subcellularLocation>
</comment>
<comment type="PTM">
    <text evidence="1">The disulfide bond between GPI8 and GPI16 is important for normal enzyme activity.</text>
</comment>
<comment type="miscellaneous">
    <text evidence="6">Present with 1560 molecules/cell in log phase SD medium.</text>
</comment>
<comment type="similarity">
    <text evidence="7">Belongs to the peptidase C13 family.</text>
</comment>
<accession>P49018</accession>
<accession>D6VSW3</accession>